<name>PIGV1_CAEEL</name>
<evidence type="ECO:0000250" key="1">
    <source>
        <dbReference type="UniProtKB" id="Q9NUD9"/>
    </source>
</evidence>
<evidence type="ECO:0000255" key="2"/>
<evidence type="ECO:0000256" key="3">
    <source>
        <dbReference type="SAM" id="MobiDB-lite"/>
    </source>
</evidence>
<evidence type="ECO:0000269" key="4">
    <source>
    </source>
</evidence>
<evidence type="ECO:0000305" key="5"/>
<evidence type="ECO:0000312" key="6">
    <source>
        <dbReference type="Proteomes" id="UP000001940"/>
    </source>
</evidence>
<evidence type="ECO:0000312" key="7">
    <source>
        <dbReference type="WormBase" id="T09B4.1"/>
    </source>
</evidence>
<dbReference type="EC" id="2.4.1.-" evidence="1"/>
<dbReference type="EMBL" id="BX284601">
    <property type="protein sequence ID" value="CCD71986.1"/>
    <property type="molecule type" value="Genomic_DNA"/>
</dbReference>
<dbReference type="PIR" id="T25876">
    <property type="entry name" value="T25876"/>
</dbReference>
<dbReference type="RefSeq" id="NP_491783.1">
    <property type="nucleotide sequence ID" value="NM_059382.8"/>
</dbReference>
<dbReference type="FunCoup" id="O02164">
    <property type="interactions" value="1349"/>
</dbReference>
<dbReference type="STRING" id="6239.T09B4.1.2"/>
<dbReference type="CAZy" id="GT76">
    <property type="family name" value="Glycosyltransferase Family 76"/>
</dbReference>
<dbReference type="PaxDb" id="6239-T09B4.1.1"/>
<dbReference type="PeptideAtlas" id="O02164"/>
<dbReference type="EnsemblMetazoa" id="T09B4.1.1">
    <property type="protein sequence ID" value="T09B4.1.1"/>
    <property type="gene ID" value="WBGene00020375"/>
</dbReference>
<dbReference type="GeneID" id="172305"/>
<dbReference type="KEGG" id="cel:CELE_T09B4.1"/>
<dbReference type="UCSC" id="T09B4.1">
    <property type="organism name" value="c. elegans"/>
</dbReference>
<dbReference type="AGR" id="WB:WBGene00020375"/>
<dbReference type="CTD" id="172305"/>
<dbReference type="WormBase" id="T09B4.1">
    <property type="protein sequence ID" value="CE13457"/>
    <property type="gene ID" value="WBGene00020375"/>
    <property type="gene designation" value="pigv-1"/>
</dbReference>
<dbReference type="eggNOG" id="KOG2647">
    <property type="taxonomic scope" value="Eukaryota"/>
</dbReference>
<dbReference type="GeneTree" id="ENSGT00390000013174"/>
<dbReference type="HOGENOM" id="CLU_026116_0_0_1"/>
<dbReference type="InParanoid" id="O02164"/>
<dbReference type="OMA" id="MAHAAWL"/>
<dbReference type="OrthoDB" id="10252502at2759"/>
<dbReference type="PhylomeDB" id="O02164"/>
<dbReference type="Reactome" id="R-CEL-162710">
    <property type="pathway name" value="Synthesis of glycosylphosphatidylinositol (GPI)"/>
</dbReference>
<dbReference type="UniPathway" id="UPA00196"/>
<dbReference type="PRO" id="PR:O02164"/>
<dbReference type="Proteomes" id="UP000001940">
    <property type="component" value="Chromosome I"/>
</dbReference>
<dbReference type="Bgee" id="WBGene00020375">
    <property type="expression patterns" value="Expressed in germ line (C elegans) and 4 other cell types or tissues"/>
</dbReference>
<dbReference type="GO" id="GO:0005789">
    <property type="term" value="C:endoplasmic reticulum membrane"/>
    <property type="evidence" value="ECO:0000318"/>
    <property type="project" value="GO_Central"/>
</dbReference>
<dbReference type="GO" id="GO:0031501">
    <property type="term" value="C:mannosyltransferase complex"/>
    <property type="evidence" value="ECO:0000318"/>
    <property type="project" value="GO_Central"/>
</dbReference>
<dbReference type="GO" id="GO:0000009">
    <property type="term" value="F:alpha-1,6-mannosyltransferase activity"/>
    <property type="evidence" value="ECO:0007669"/>
    <property type="project" value="InterPro"/>
</dbReference>
<dbReference type="GO" id="GO:0004376">
    <property type="term" value="F:glycolipid mannosyltransferase activity"/>
    <property type="evidence" value="ECO:0007669"/>
    <property type="project" value="InterPro"/>
</dbReference>
<dbReference type="GO" id="GO:0000030">
    <property type="term" value="F:mannosyltransferase activity"/>
    <property type="evidence" value="ECO:0000318"/>
    <property type="project" value="GO_Central"/>
</dbReference>
<dbReference type="GO" id="GO:0006506">
    <property type="term" value="P:GPI anchor biosynthetic process"/>
    <property type="evidence" value="ECO:0000318"/>
    <property type="project" value="GO_Central"/>
</dbReference>
<dbReference type="InterPro" id="IPR007315">
    <property type="entry name" value="PIG-V/Gpi18"/>
</dbReference>
<dbReference type="PANTHER" id="PTHR12468">
    <property type="entry name" value="GPI MANNOSYLTRANSFERASE 2"/>
    <property type="match status" value="1"/>
</dbReference>
<dbReference type="PANTHER" id="PTHR12468:SF2">
    <property type="entry name" value="GPI MANNOSYLTRANSFERASE 2"/>
    <property type="match status" value="1"/>
</dbReference>
<dbReference type="Pfam" id="PF04188">
    <property type="entry name" value="Mannosyl_trans2"/>
    <property type="match status" value="2"/>
</dbReference>
<accession>O02164</accession>
<sequence length="672" mass="78256">MRRREPGRDVKRAAEEEFIELERRTDTYEDAVLNEDPQMKGFRFPSILSFPVPNKTIETGVTDENPFSARKSAFFTNRLIGREESDSSSSREDSPLGSTETGESCSTTDDEESKEKRIEYRDSQTQRCLGFCFRQLFFSRMWVFILQFIASYYAGDRFRTDGFNLVDKLIEPGQSVFGDVVVRRGLMGLRRWDAQQFLFIAEHHYIFEHSLAFFAGFPETVNYVRVGVNNGMESVFGWTFPPWVTITLAAVFVNLFCFLLCGMTLYQVVLIMTRSVKISLLAVSIFAFNPASIFFSSAYSESMFFTMTLTGFVFMLFGLRGKGFWHRMLKGFTGTICFGLTFAVRSNGLLNFLYVAWIWCGTLLWDEEMPIPDCHKLISTLAATKNERYKQEWQAKFWRFQQKRKQNRKVFRWTDPNFSRCVTLFIVIVCAISATLLFFTPYVFMTNFTADEFCKPQDSHKQAVETIAKTVRLSPKTVSVKNAWEKTTWCKKPKLFGIIARYYGEIQTKYWSVKFFGYWKIKKIPCFLMMLPAAILTVLAIKSSWNDVFLNKRWNNIWVLTARSDHSLPMAIHSSVLLFVAIFYINSEVFTRIIFSSSPFIYIYIATYIDKLTQGTIAGNRLWQYFESPGILPFFVFRRVWQDGWRGKLLYIYILGYFVFGTMAHSAWLPFT</sequence>
<gene>
    <name evidence="7" type="primary">pigv-1</name>
    <name evidence="7" type="ORF">T09B4.1</name>
</gene>
<reference evidence="6" key="1">
    <citation type="journal article" date="1998" name="Science">
        <title>Genome sequence of the nematode C. elegans: a platform for investigating biology.</title>
        <authorList>
            <consortium name="The C. elegans sequencing consortium"/>
        </authorList>
    </citation>
    <scope>NUCLEOTIDE SEQUENCE [LARGE SCALE GENOMIC DNA]</scope>
    <source>
        <strain evidence="6">Bristol N2</strain>
    </source>
</reference>
<reference evidence="5" key="2">
    <citation type="journal article" date="2015" name="PLoS Genet.">
        <title>Glycosyl phosphatidylinositol anchor biosynthesis is essential for maintaining epithelial integrity during Caenorhabditis elegans embryogenesis.</title>
        <authorList>
            <person name="Budirahardja Y."/>
            <person name="Doan T.D."/>
            <person name="Zaidel-Bar R."/>
        </authorList>
    </citation>
    <scope>FUNCTION</scope>
    <scope>SUBCELLULAR LOCATION</scope>
    <scope>TISSUE SPECIFICITY</scope>
    <scope>MUTAGENESIS OF GLY-361</scope>
</reference>
<feature type="chain" id="PRO_0000433599" description="GPI mannosyltransferase pigv-1" evidence="5">
    <location>
        <begin position="1"/>
        <end position="672"/>
    </location>
</feature>
<feature type="topological domain" description="Cytoplasmic" evidence="5">
    <location>
        <begin position="1"/>
        <end position="134"/>
    </location>
</feature>
<feature type="transmembrane region" description="Helical" evidence="2">
    <location>
        <begin position="135"/>
        <end position="155"/>
    </location>
</feature>
<feature type="topological domain" description="Extracellular" evidence="5">
    <location>
        <begin position="156"/>
        <end position="239"/>
    </location>
</feature>
<feature type="transmembrane region" description="Helical" evidence="2">
    <location>
        <begin position="240"/>
        <end position="260"/>
    </location>
</feature>
<feature type="topological domain" description="Cytoplasmic" evidence="5">
    <location>
        <begin position="261"/>
        <end position="277"/>
    </location>
</feature>
<feature type="transmembrane region" description="Helical" evidence="2">
    <location>
        <begin position="278"/>
        <end position="298"/>
    </location>
</feature>
<feature type="transmembrane region" description="Helical" evidence="2">
    <location>
        <begin position="299"/>
        <end position="319"/>
    </location>
</feature>
<feature type="topological domain" description="Extracellular" evidence="5">
    <location>
        <begin position="320"/>
        <end position="345"/>
    </location>
</feature>
<feature type="transmembrane region" description="Helical" evidence="2">
    <location>
        <begin position="346"/>
        <end position="366"/>
    </location>
</feature>
<feature type="topological domain" description="Cytoplasmic" evidence="5">
    <location>
        <begin position="367"/>
        <end position="423"/>
    </location>
</feature>
<feature type="transmembrane region" description="Helical" evidence="2">
    <location>
        <begin position="424"/>
        <end position="444"/>
    </location>
</feature>
<feature type="topological domain" description="Extracellular" evidence="5">
    <location>
        <begin position="445"/>
        <end position="520"/>
    </location>
</feature>
<feature type="transmembrane region" description="Helical" evidence="2">
    <location>
        <begin position="521"/>
        <end position="541"/>
    </location>
</feature>
<feature type="topological domain" description="Cytoplasmic" evidence="5">
    <location>
        <begin position="542"/>
        <end position="569"/>
    </location>
</feature>
<feature type="transmembrane region" description="Helical" evidence="2">
    <location>
        <begin position="570"/>
        <end position="590"/>
    </location>
</feature>
<feature type="topological domain" description="Extracellular" evidence="5">
    <location>
        <begin position="591"/>
        <end position="592"/>
    </location>
</feature>
<feature type="transmembrane region" description="Helical" evidence="2">
    <location>
        <begin position="593"/>
        <end position="613"/>
    </location>
</feature>
<feature type="topological domain" description="Cytoplasmic" evidence="5">
    <location>
        <begin position="614"/>
        <end position="648"/>
    </location>
</feature>
<feature type="transmembrane region" description="Helical" evidence="2">
    <location>
        <begin position="649"/>
        <end position="669"/>
    </location>
</feature>
<feature type="topological domain" description="Extracellular" evidence="5">
    <location>
        <begin position="670"/>
        <end position="672"/>
    </location>
</feature>
<feature type="region of interest" description="Disordered" evidence="3">
    <location>
        <begin position="82"/>
        <end position="115"/>
    </location>
</feature>
<feature type="compositionally biased region" description="Basic and acidic residues" evidence="3">
    <location>
        <begin position="82"/>
        <end position="94"/>
    </location>
</feature>
<feature type="compositionally biased region" description="Low complexity" evidence="3">
    <location>
        <begin position="97"/>
        <end position="107"/>
    </location>
</feature>
<feature type="mutagenesis site" description="In qm34; temperature sensitive mutant resulting in elongation arrest and over 80% embryonic lethality at 25 degrees Celsius due to epithelial defects during elongation with cysts forming inside the embryo and/or cells leaking out from the embryo body." evidence="4">
    <original>G</original>
    <variation>E</variation>
    <location>
        <position position="361"/>
    </location>
</feature>
<protein>
    <recommendedName>
        <fullName evidence="5">GPI mannosyltransferase pigv-1</fullName>
        <ecNumber evidence="1">2.4.1.-</ecNumber>
    </recommendedName>
    <alternativeName>
        <fullName evidence="7">Phosphatidylinositol-glycan anchor biosynthesis class V protein 1 homolog</fullName>
    </alternativeName>
</protein>
<comment type="function">
    <text evidence="1 4">Alpha-1,6-mannosyltransferase involved in glycosylphosphatidylinositol-anchor biosynthesis (By similarity). Transfers the second mannose to the glycosylphosphatidylinositol during GPI precursor assembly (By similarity). Required for maintenance of epithelial integrity during embryogenesis (PubMed:25807459).</text>
</comment>
<comment type="pathway">
    <text evidence="1">Glycolipid biosynthesis; glycosylphosphatidylinositol-anchor biosynthesis.</text>
</comment>
<comment type="subcellular location">
    <subcellularLocation>
        <location evidence="4">Endoplasmic reticulum membrane</location>
        <topology evidence="2">Multi-pass membrane protein</topology>
    </subcellularLocation>
</comment>
<comment type="tissue specificity">
    <text evidence="4">Expressed in epithelial tissues including the epidermis, pharynx, intestine, rectum and excretory cell during embryogenesis.</text>
</comment>
<comment type="similarity">
    <text evidence="5">Belongs to the PIGV family.</text>
</comment>
<proteinExistence type="evidence at protein level"/>
<organism evidence="6">
    <name type="scientific">Caenorhabditis elegans</name>
    <dbReference type="NCBI Taxonomy" id="6239"/>
    <lineage>
        <taxon>Eukaryota</taxon>
        <taxon>Metazoa</taxon>
        <taxon>Ecdysozoa</taxon>
        <taxon>Nematoda</taxon>
        <taxon>Chromadorea</taxon>
        <taxon>Rhabditida</taxon>
        <taxon>Rhabditina</taxon>
        <taxon>Rhabditomorpha</taxon>
        <taxon>Rhabditoidea</taxon>
        <taxon>Rhabditidae</taxon>
        <taxon>Peloderinae</taxon>
        <taxon>Caenorhabditis</taxon>
    </lineage>
</organism>
<keyword id="KW-0256">Endoplasmic reticulum</keyword>
<keyword id="KW-0328">Glycosyltransferase</keyword>
<keyword id="KW-0337">GPI-anchor biosynthesis</keyword>
<keyword id="KW-0472">Membrane</keyword>
<keyword id="KW-1185">Reference proteome</keyword>
<keyword id="KW-0808">Transferase</keyword>
<keyword id="KW-0812">Transmembrane</keyword>
<keyword id="KW-1133">Transmembrane helix</keyword>